<feature type="chain" id="PRO_0000122158" description="Serine--tRNA ligase">
    <location>
        <begin position="1"/>
        <end position="429"/>
    </location>
</feature>
<feature type="binding site" evidence="1">
    <location>
        <begin position="236"/>
        <end position="238"/>
    </location>
    <ligand>
        <name>L-serine</name>
        <dbReference type="ChEBI" id="CHEBI:33384"/>
    </ligand>
</feature>
<feature type="binding site" evidence="1">
    <location>
        <begin position="267"/>
        <end position="269"/>
    </location>
    <ligand>
        <name>ATP</name>
        <dbReference type="ChEBI" id="CHEBI:30616"/>
    </ligand>
</feature>
<feature type="binding site" evidence="1">
    <location>
        <position position="290"/>
    </location>
    <ligand>
        <name>L-serine</name>
        <dbReference type="ChEBI" id="CHEBI:33384"/>
    </ligand>
</feature>
<feature type="binding site" evidence="1">
    <location>
        <begin position="354"/>
        <end position="357"/>
    </location>
    <ligand>
        <name>ATP</name>
        <dbReference type="ChEBI" id="CHEBI:30616"/>
    </ligand>
</feature>
<feature type="binding site" evidence="1">
    <location>
        <position position="390"/>
    </location>
    <ligand>
        <name>L-serine</name>
        <dbReference type="ChEBI" id="CHEBI:33384"/>
    </ligand>
</feature>
<dbReference type="EC" id="6.1.1.11" evidence="1"/>
<dbReference type="EMBL" id="BA000021">
    <property type="protein sequence ID" value="BAC24635.1"/>
    <property type="molecule type" value="Genomic_DNA"/>
</dbReference>
<dbReference type="SMR" id="Q8D265"/>
<dbReference type="STRING" id="36870.gene:10368993"/>
<dbReference type="KEGG" id="wbr:serS"/>
<dbReference type="eggNOG" id="COG0172">
    <property type="taxonomic scope" value="Bacteria"/>
</dbReference>
<dbReference type="HOGENOM" id="CLU_023797_1_1_6"/>
<dbReference type="OrthoDB" id="9804647at2"/>
<dbReference type="UniPathway" id="UPA00906">
    <property type="reaction ID" value="UER00895"/>
</dbReference>
<dbReference type="Proteomes" id="UP000000562">
    <property type="component" value="Chromosome"/>
</dbReference>
<dbReference type="GO" id="GO:0005737">
    <property type="term" value="C:cytoplasm"/>
    <property type="evidence" value="ECO:0007669"/>
    <property type="project" value="UniProtKB-SubCell"/>
</dbReference>
<dbReference type="GO" id="GO:0005524">
    <property type="term" value="F:ATP binding"/>
    <property type="evidence" value="ECO:0007669"/>
    <property type="project" value="UniProtKB-UniRule"/>
</dbReference>
<dbReference type="GO" id="GO:0004828">
    <property type="term" value="F:serine-tRNA ligase activity"/>
    <property type="evidence" value="ECO:0007669"/>
    <property type="project" value="UniProtKB-UniRule"/>
</dbReference>
<dbReference type="GO" id="GO:0016260">
    <property type="term" value="P:selenocysteine biosynthetic process"/>
    <property type="evidence" value="ECO:0007669"/>
    <property type="project" value="UniProtKB-UniRule"/>
</dbReference>
<dbReference type="GO" id="GO:0006434">
    <property type="term" value="P:seryl-tRNA aminoacylation"/>
    <property type="evidence" value="ECO:0007669"/>
    <property type="project" value="UniProtKB-UniRule"/>
</dbReference>
<dbReference type="CDD" id="cd00770">
    <property type="entry name" value="SerRS_core"/>
    <property type="match status" value="1"/>
</dbReference>
<dbReference type="Gene3D" id="3.30.930.10">
    <property type="entry name" value="Bira Bifunctional Protein, Domain 2"/>
    <property type="match status" value="1"/>
</dbReference>
<dbReference type="Gene3D" id="1.10.287.40">
    <property type="entry name" value="Serine-tRNA synthetase, tRNA binding domain"/>
    <property type="match status" value="1"/>
</dbReference>
<dbReference type="HAMAP" id="MF_00176">
    <property type="entry name" value="Ser_tRNA_synth_type1"/>
    <property type="match status" value="1"/>
</dbReference>
<dbReference type="InterPro" id="IPR002314">
    <property type="entry name" value="aa-tRNA-synt_IIb"/>
</dbReference>
<dbReference type="InterPro" id="IPR006195">
    <property type="entry name" value="aa-tRNA-synth_II"/>
</dbReference>
<dbReference type="InterPro" id="IPR045864">
    <property type="entry name" value="aa-tRNA-synth_II/BPL/LPL"/>
</dbReference>
<dbReference type="InterPro" id="IPR002317">
    <property type="entry name" value="Ser-tRNA-ligase_type_1"/>
</dbReference>
<dbReference type="InterPro" id="IPR015866">
    <property type="entry name" value="Ser-tRNA-synth_1_N"/>
</dbReference>
<dbReference type="InterPro" id="IPR042103">
    <property type="entry name" value="SerRS_1_N_sf"/>
</dbReference>
<dbReference type="InterPro" id="IPR033729">
    <property type="entry name" value="SerRS_core"/>
</dbReference>
<dbReference type="InterPro" id="IPR010978">
    <property type="entry name" value="tRNA-bd_arm"/>
</dbReference>
<dbReference type="NCBIfam" id="TIGR00414">
    <property type="entry name" value="serS"/>
    <property type="match status" value="1"/>
</dbReference>
<dbReference type="PANTHER" id="PTHR43697:SF1">
    <property type="entry name" value="SERINE--TRNA LIGASE"/>
    <property type="match status" value="1"/>
</dbReference>
<dbReference type="PANTHER" id="PTHR43697">
    <property type="entry name" value="SERYL-TRNA SYNTHETASE"/>
    <property type="match status" value="1"/>
</dbReference>
<dbReference type="Pfam" id="PF02403">
    <property type="entry name" value="Seryl_tRNA_N"/>
    <property type="match status" value="1"/>
</dbReference>
<dbReference type="Pfam" id="PF00587">
    <property type="entry name" value="tRNA-synt_2b"/>
    <property type="match status" value="1"/>
</dbReference>
<dbReference type="PIRSF" id="PIRSF001529">
    <property type="entry name" value="Ser-tRNA-synth_IIa"/>
    <property type="match status" value="1"/>
</dbReference>
<dbReference type="PRINTS" id="PR00981">
    <property type="entry name" value="TRNASYNTHSER"/>
</dbReference>
<dbReference type="SUPFAM" id="SSF55681">
    <property type="entry name" value="Class II aaRS and biotin synthetases"/>
    <property type="match status" value="1"/>
</dbReference>
<dbReference type="SUPFAM" id="SSF46589">
    <property type="entry name" value="tRNA-binding arm"/>
    <property type="match status" value="1"/>
</dbReference>
<dbReference type="PROSITE" id="PS50862">
    <property type="entry name" value="AA_TRNA_LIGASE_II"/>
    <property type="match status" value="1"/>
</dbReference>
<comment type="function">
    <text evidence="1">Catalyzes the attachment of serine to tRNA(Ser). Is also able to aminoacylate tRNA(Sec) with serine, to form the misacylated tRNA L-seryl-tRNA(Sec), which will be further converted into selenocysteinyl-tRNA(Sec).</text>
</comment>
<comment type="catalytic activity">
    <reaction evidence="1">
        <text>tRNA(Ser) + L-serine + ATP = L-seryl-tRNA(Ser) + AMP + diphosphate + H(+)</text>
        <dbReference type="Rhea" id="RHEA:12292"/>
        <dbReference type="Rhea" id="RHEA-COMP:9669"/>
        <dbReference type="Rhea" id="RHEA-COMP:9703"/>
        <dbReference type="ChEBI" id="CHEBI:15378"/>
        <dbReference type="ChEBI" id="CHEBI:30616"/>
        <dbReference type="ChEBI" id="CHEBI:33019"/>
        <dbReference type="ChEBI" id="CHEBI:33384"/>
        <dbReference type="ChEBI" id="CHEBI:78442"/>
        <dbReference type="ChEBI" id="CHEBI:78533"/>
        <dbReference type="ChEBI" id="CHEBI:456215"/>
        <dbReference type="EC" id="6.1.1.11"/>
    </reaction>
</comment>
<comment type="catalytic activity">
    <reaction evidence="1">
        <text>tRNA(Sec) + L-serine + ATP = L-seryl-tRNA(Sec) + AMP + diphosphate + H(+)</text>
        <dbReference type="Rhea" id="RHEA:42580"/>
        <dbReference type="Rhea" id="RHEA-COMP:9742"/>
        <dbReference type="Rhea" id="RHEA-COMP:10128"/>
        <dbReference type="ChEBI" id="CHEBI:15378"/>
        <dbReference type="ChEBI" id="CHEBI:30616"/>
        <dbReference type="ChEBI" id="CHEBI:33019"/>
        <dbReference type="ChEBI" id="CHEBI:33384"/>
        <dbReference type="ChEBI" id="CHEBI:78442"/>
        <dbReference type="ChEBI" id="CHEBI:78533"/>
        <dbReference type="ChEBI" id="CHEBI:456215"/>
        <dbReference type="EC" id="6.1.1.11"/>
    </reaction>
</comment>
<comment type="pathway">
    <text evidence="1">Aminoacyl-tRNA biosynthesis; selenocysteinyl-tRNA(Sec) biosynthesis; L-seryl-tRNA(Sec) from L-serine and tRNA(Sec): step 1/1.</text>
</comment>
<comment type="subunit">
    <text evidence="1">Homodimer. The tRNA molecule binds across the dimer.</text>
</comment>
<comment type="subcellular location">
    <subcellularLocation>
        <location evidence="1">Cytoplasm</location>
    </subcellularLocation>
</comment>
<comment type="domain">
    <text evidence="1">Consists of two distinct domains, a catalytic core and a N-terminal extension that is involved in tRNA binding.</text>
</comment>
<comment type="similarity">
    <text evidence="1">Belongs to the class-II aminoacyl-tRNA synthetase family. Type-1 seryl-tRNA synthetase subfamily.</text>
</comment>
<protein>
    <recommendedName>
        <fullName evidence="1">Serine--tRNA ligase</fullName>
        <ecNumber evidence="1">6.1.1.11</ecNumber>
    </recommendedName>
    <alternativeName>
        <fullName evidence="1">Seryl-tRNA synthetase</fullName>
        <shortName evidence="1">SerRS</shortName>
    </alternativeName>
    <alternativeName>
        <fullName evidence="1">Seryl-tRNA(Ser/Sec) synthetase</fullName>
    </alternativeName>
</protein>
<accession>Q8D265</accession>
<proteinExistence type="inferred from homology"/>
<gene>
    <name evidence="1" type="primary">serS</name>
    <name type="ordered locus">WIGBR4890</name>
</gene>
<name>SYS_WIGBR</name>
<keyword id="KW-0030">Aminoacyl-tRNA synthetase</keyword>
<keyword id="KW-0067">ATP-binding</keyword>
<keyword id="KW-0963">Cytoplasm</keyword>
<keyword id="KW-0436">Ligase</keyword>
<keyword id="KW-0547">Nucleotide-binding</keyword>
<keyword id="KW-0648">Protein biosynthesis</keyword>
<keyword id="KW-1185">Reference proteome</keyword>
<reference key="1">
    <citation type="journal article" date="2002" name="Nat. Genet.">
        <title>Genome sequence of the endocellular obligate symbiont of tsetse flies, Wigglesworthia glossinidia.</title>
        <authorList>
            <person name="Akman L."/>
            <person name="Yamashita A."/>
            <person name="Watanabe H."/>
            <person name="Oshima K."/>
            <person name="Shiba T."/>
            <person name="Hattori M."/>
            <person name="Aksoy S."/>
        </authorList>
    </citation>
    <scope>NUCLEOTIDE SEQUENCE [LARGE SCALE GENOMIC DNA]</scope>
</reference>
<sequence>MIDHKLIIKNIEEVCKKLILRNFYLDKKKILLQDQKRKILQIEVEKLQNKRNLQSKIISKIKINNKNIDIYKNKSNKINILLNEKKQKLKKIKKEIDNYLSTIPNILDEKVPIGKDQKNNIEVKKWGSPKIYNFKIKSHVEIGEKIKYLDFSRSAKISGSRFVVMKNKISYMHRALSQFMLNLHTNQHGYEEYYVPYLVNKNMLYGTGQLPKFYNDFFYAKSFFEDIQSCYALIPTAEVPLTNLMRNEIIDENYLPIKMTSHTPCFRSEAGSYGKDTKGLIRMHQFDKVEIVQIVSPENSIKALEEITHHAERVLQLLDLPYRKILLCSGDTGFSSCKTYDLEVWMPSRNKYIEVSSCSNTSDFQSRRTKIRYRKISNKEIHLTHILNGSALAISRTLASIIENYQTKEGNIKVPKILQPYMDGLKLIK</sequence>
<organism>
    <name type="scientific">Wigglesworthia glossinidia brevipalpis</name>
    <dbReference type="NCBI Taxonomy" id="36870"/>
    <lineage>
        <taxon>Bacteria</taxon>
        <taxon>Pseudomonadati</taxon>
        <taxon>Pseudomonadota</taxon>
        <taxon>Gammaproteobacteria</taxon>
        <taxon>Enterobacterales</taxon>
        <taxon>Erwiniaceae</taxon>
        <taxon>Wigglesworthia</taxon>
    </lineage>
</organism>
<evidence type="ECO:0000255" key="1">
    <source>
        <dbReference type="HAMAP-Rule" id="MF_00176"/>
    </source>
</evidence>